<organism>
    <name type="scientific">Methanococcoides burtonii (strain DSM 6242 / NBRC 107633 / OCM 468 / ACE-M)</name>
    <dbReference type="NCBI Taxonomy" id="259564"/>
    <lineage>
        <taxon>Archaea</taxon>
        <taxon>Methanobacteriati</taxon>
        <taxon>Methanobacteriota</taxon>
        <taxon>Stenosarchaea group</taxon>
        <taxon>Methanomicrobia</taxon>
        <taxon>Methanosarcinales</taxon>
        <taxon>Methanosarcinaceae</taxon>
        <taxon>Methanococcoides</taxon>
    </lineage>
</organism>
<reference key="1">
    <citation type="journal article" date="2009" name="ISME J.">
        <title>The genome sequence of the psychrophilic archaeon, Methanococcoides burtonii: the role of genome evolution in cold adaptation.</title>
        <authorList>
            <person name="Allen M.A."/>
            <person name="Lauro F.M."/>
            <person name="Williams T.J."/>
            <person name="Burg D."/>
            <person name="Siddiqui K.S."/>
            <person name="De Francisci D."/>
            <person name="Chong K.W."/>
            <person name="Pilak O."/>
            <person name="Chew H.H."/>
            <person name="De Maere M.Z."/>
            <person name="Ting L."/>
            <person name="Katrib M."/>
            <person name="Ng C."/>
            <person name="Sowers K.R."/>
            <person name="Galperin M.Y."/>
            <person name="Anderson I.J."/>
            <person name="Ivanova N."/>
            <person name="Dalin E."/>
            <person name="Martinez M."/>
            <person name="Lapidus A."/>
            <person name="Hauser L."/>
            <person name="Land M."/>
            <person name="Thomas T."/>
            <person name="Cavicchioli R."/>
        </authorList>
    </citation>
    <scope>NUCLEOTIDE SEQUENCE [LARGE SCALE GENOMIC DNA]</scope>
    <source>
        <strain>DSM 6242 / NBRC 107633 / OCM 468 / ACE-M</strain>
    </source>
</reference>
<gene>
    <name evidence="1" type="primary">mch</name>
    <name type="ordered locus">Mbur_0653</name>
</gene>
<name>MCH_METBU</name>
<comment type="function">
    <text evidence="1">Catalyzes the hydrolysis of methenyl-H(4)MPT(+) to 5-formyl-H(4)MPT.</text>
</comment>
<comment type="catalytic activity">
    <reaction evidence="1">
        <text>5,10-methenyl-5,6,7,8-tetrahydromethanopterin + H2O = N(5)-formyl-5,6,7,8-tetrahydromethanopterin + H(+)</text>
        <dbReference type="Rhea" id="RHEA:19053"/>
        <dbReference type="ChEBI" id="CHEBI:15377"/>
        <dbReference type="ChEBI" id="CHEBI:15378"/>
        <dbReference type="ChEBI" id="CHEBI:58018"/>
        <dbReference type="ChEBI" id="CHEBI:58337"/>
        <dbReference type="EC" id="3.5.4.27"/>
    </reaction>
</comment>
<comment type="subcellular location">
    <subcellularLocation>
        <location evidence="1">Cytoplasm</location>
    </subcellularLocation>
</comment>
<comment type="similarity">
    <text evidence="1">Belongs to the MCH family.</text>
</comment>
<evidence type="ECO:0000255" key="1">
    <source>
        <dbReference type="HAMAP-Rule" id="MF_00486"/>
    </source>
</evidence>
<keyword id="KW-0963">Cytoplasm</keyword>
<keyword id="KW-0378">Hydrolase</keyword>
<keyword id="KW-0554">One-carbon metabolism</keyword>
<accession>Q12Y52</accession>
<proteinExistence type="inferred from homology"/>
<feature type="chain" id="PRO_1000014397" description="Methenyltetrahydromethanopterin cyclohydrolase">
    <location>
        <begin position="1"/>
        <end position="320"/>
    </location>
</feature>
<protein>
    <recommendedName>
        <fullName evidence="1">Methenyltetrahydromethanopterin cyclohydrolase</fullName>
        <ecNumber evidence="1">3.5.4.27</ecNumber>
    </recommendedName>
    <alternativeName>
        <fullName evidence="1">Methenyl-H4MPT cyclohydrolase</fullName>
    </alternativeName>
</protein>
<dbReference type="EC" id="3.5.4.27" evidence="1"/>
<dbReference type="EMBL" id="CP000300">
    <property type="protein sequence ID" value="ABE51624.1"/>
    <property type="molecule type" value="Genomic_DNA"/>
</dbReference>
<dbReference type="RefSeq" id="WP_011498783.1">
    <property type="nucleotide sequence ID" value="NC_007955.1"/>
</dbReference>
<dbReference type="SMR" id="Q12Y52"/>
<dbReference type="STRING" id="259564.Mbur_0653"/>
<dbReference type="GeneID" id="3997983"/>
<dbReference type="KEGG" id="mbu:Mbur_0653"/>
<dbReference type="HOGENOM" id="CLU_876031_0_0_2"/>
<dbReference type="OrthoDB" id="105468at2157"/>
<dbReference type="Proteomes" id="UP000001979">
    <property type="component" value="Chromosome"/>
</dbReference>
<dbReference type="GO" id="GO:0005737">
    <property type="term" value="C:cytoplasm"/>
    <property type="evidence" value="ECO:0007669"/>
    <property type="project" value="UniProtKB-SubCell"/>
</dbReference>
<dbReference type="GO" id="GO:0018759">
    <property type="term" value="F:methenyltetrahydromethanopterin cyclohydrolase activity"/>
    <property type="evidence" value="ECO:0007669"/>
    <property type="project" value="UniProtKB-UniRule"/>
</dbReference>
<dbReference type="GO" id="GO:0019386">
    <property type="term" value="P:methanogenesis, from carbon dioxide"/>
    <property type="evidence" value="ECO:0007669"/>
    <property type="project" value="UniProtKB-UniRule"/>
</dbReference>
<dbReference type="GO" id="GO:0006730">
    <property type="term" value="P:one-carbon metabolic process"/>
    <property type="evidence" value="ECO:0007669"/>
    <property type="project" value="UniProtKB-UniRule"/>
</dbReference>
<dbReference type="CDD" id="cd00545">
    <property type="entry name" value="MCH"/>
    <property type="match status" value="1"/>
</dbReference>
<dbReference type="Gene3D" id="3.10.340.11">
    <property type="entry name" value="Methenyltetrahydromethanopterin Cyclohydrolase, Chain A, domain 1"/>
    <property type="match status" value="1"/>
</dbReference>
<dbReference type="Gene3D" id="3.30.1030.10">
    <property type="entry name" value="Methenyltetrahydromethanopterin Cyclohydrolase, Chain A, domain 2"/>
    <property type="match status" value="1"/>
</dbReference>
<dbReference type="HAMAP" id="MF_00486">
    <property type="entry name" value="McH"/>
    <property type="match status" value="1"/>
</dbReference>
<dbReference type="InterPro" id="IPR003209">
    <property type="entry name" value="METHMP_CycHdrlase"/>
</dbReference>
<dbReference type="NCBIfam" id="TIGR03120">
    <property type="entry name" value="one_C_mch"/>
    <property type="match status" value="1"/>
</dbReference>
<dbReference type="Pfam" id="PF02289">
    <property type="entry name" value="MCH"/>
    <property type="match status" value="1"/>
</dbReference>
<dbReference type="SUPFAM" id="SSF56199">
    <property type="entry name" value="Methenyltetrahydromethanopterin cyclohydrolase"/>
    <property type="match status" value="1"/>
</dbReference>
<sequence>MISVNEKGLAIIDEMLDWEEDVKIESKVLENGATIIDCGVNVEGGYDAGMYLSRLCLADLAEISYTKVDLEGLAVPAIQIATDHPTIACMASQYAGWRIAVGDYFGMGSGPARGLGLKPKELYEEIGYKDEADAAVLVMESDKLPTEEIVEYIAKHCSVEPQNVFIAVAPTSSIAGSVQISARVVETGIHKLESIGYDINKIKSGFGVAPIAPIVGDDTKCMGSTNDCIIYCGETYYTVEDGNAEELEDFVKKAPSSTSRDFGKPFYTTFKEAGFDFFKVDAGMFAPAKITINDLKSKKSFTSGRINPGILLESFGIKNV</sequence>